<sequence length="146" mass="15648">MLVLIQRASQAAVHVDDEVVGQIGPGLLALVGMEPGDTEAQLQRMAERLLGYRVFADEAGKMNRSLRDTGGGLLLVSQFTLAADTRSGMRPSFTSAAPPAEAEQGFNRFVEICRENHAPGVETGRFGAHMVVSLVNDGPVTFLLRP</sequence>
<dbReference type="EC" id="3.1.1.96" evidence="1"/>
<dbReference type="EMBL" id="CP001111">
    <property type="protein sequence ID" value="ACF53272.1"/>
    <property type="molecule type" value="Genomic_DNA"/>
</dbReference>
<dbReference type="RefSeq" id="WP_012512212.1">
    <property type="nucleotide sequence ID" value="NC_011071.1"/>
</dbReference>
<dbReference type="SMR" id="B4SKG5"/>
<dbReference type="STRING" id="391008.Smal_3573"/>
<dbReference type="KEGG" id="smt:Smal_3573"/>
<dbReference type="eggNOG" id="COG1490">
    <property type="taxonomic scope" value="Bacteria"/>
</dbReference>
<dbReference type="HOGENOM" id="CLU_076901_1_1_6"/>
<dbReference type="OrthoDB" id="9801395at2"/>
<dbReference type="Proteomes" id="UP000001867">
    <property type="component" value="Chromosome"/>
</dbReference>
<dbReference type="GO" id="GO:0005737">
    <property type="term" value="C:cytoplasm"/>
    <property type="evidence" value="ECO:0007669"/>
    <property type="project" value="UniProtKB-SubCell"/>
</dbReference>
<dbReference type="GO" id="GO:0051500">
    <property type="term" value="F:D-tyrosyl-tRNA(Tyr) deacylase activity"/>
    <property type="evidence" value="ECO:0007669"/>
    <property type="project" value="TreeGrafter"/>
</dbReference>
<dbReference type="GO" id="GO:0106026">
    <property type="term" value="F:Gly-tRNA(Ala) deacylase activity"/>
    <property type="evidence" value="ECO:0007669"/>
    <property type="project" value="UniProtKB-UniRule"/>
</dbReference>
<dbReference type="GO" id="GO:0043908">
    <property type="term" value="F:Ser(Gly)-tRNA(Ala) hydrolase activity"/>
    <property type="evidence" value="ECO:0007669"/>
    <property type="project" value="UniProtKB-UniRule"/>
</dbReference>
<dbReference type="GO" id="GO:0000049">
    <property type="term" value="F:tRNA binding"/>
    <property type="evidence" value="ECO:0007669"/>
    <property type="project" value="UniProtKB-UniRule"/>
</dbReference>
<dbReference type="GO" id="GO:0019478">
    <property type="term" value="P:D-amino acid catabolic process"/>
    <property type="evidence" value="ECO:0007669"/>
    <property type="project" value="UniProtKB-UniRule"/>
</dbReference>
<dbReference type="CDD" id="cd00563">
    <property type="entry name" value="Dtyr_deacylase"/>
    <property type="match status" value="1"/>
</dbReference>
<dbReference type="FunFam" id="3.50.80.10:FF:000001">
    <property type="entry name" value="D-aminoacyl-tRNA deacylase"/>
    <property type="match status" value="1"/>
</dbReference>
<dbReference type="Gene3D" id="3.50.80.10">
    <property type="entry name" value="D-tyrosyl-tRNA(Tyr) deacylase"/>
    <property type="match status" value="1"/>
</dbReference>
<dbReference type="HAMAP" id="MF_00518">
    <property type="entry name" value="Deacylase_Dtd"/>
    <property type="match status" value="1"/>
</dbReference>
<dbReference type="InterPro" id="IPR003732">
    <property type="entry name" value="Daa-tRNA_deacyls_DTD"/>
</dbReference>
<dbReference type="InterPro" id="IPR023509">
    <property type="entry name" value="DTD-like_sf"/>
</dbReference>
<dbReference type="NCBIfam" id="TIGR00256">
    <property type="entry name" value="D-aminoacyl-tRNA deacylase"/>
    <property type="match status" value="1"/>
</dbReference>
<dbReference type="PANTHER" id="PTHR10472:SF5">
    <property type="entry name" value="D-AMINOACYL-TRNA DEACYLASE 1"/>
    <property type="match status" value="1"/>
</dbReference>
<dbReference type="PANTHER" id="PTHR10472">
    <property type="entry name" value="D-TYROSYL-TRNA TYR DEACYLASE"/>
    <property type="match status" value="1"/>
</dbReference>
<dbReference type="Pfam" id="PF02580">
    <property type="entry name" value="Tyr_Deacylase"/>
    <property type="match status" value="1"/>
</dbReference>
<dbReference type="SUPFAM" id="SSF69500">
    <property type="entry name" value="DTD-like"/>
    <property type="match status" value="1"/>
</dbReference>
<evidence type="ECO:0000255" key="1">
    <source>
        <dbReference type="HAMAP-Rule" id="MF_00518"/>
    </source>
</evidence>
<proteinExistence type="inferred from homology"/>
<name>DTD_STRM5</name>
<accession>B4SKG5</accession>
<feature type="chain" id="PRO_1000127578" description="D-aminoacyl-tRNA deacylase">
    <location>
        <begin position="1"/>
        <end position="146"/>
    </location>
</feature>
<feature type="short sequence motif" description="Gly-cisPro motif, important for rejection of L-amino acids" evidence="1">
    <location>
        <begin position="138"/>
        <end position="139"/>
    </location>
</feature>
<organism>
    <name type="scientific">Stenotrophomonas maltophilia (strain R551-3)</name>
    <dbReference type="NCBI Taxonomy" id="391008"/>
    <lineage>
        <taxon>Bacteria</taxon>
        <taxon>Pseudomonadati</taxon>
        <taxon>Pseudomonadota</taxon>
        <taxon>Gammaproteobacteria</taxon>
        <taxon>Lysobacterales</taxon>
        <taxon>Lysobacteraceae</taxon>
        <taxon>Stenotrophomonas</taxon>
        <taxon>Stenotrophomonas maltophilia group</taxon>
    </lineage>
</organism>
<reference key="1">
    <citation type="submission" date="2008-06" db="EMBL/GenBank/DDBJ databases">
        <title>Complete sequence of Stenotrophomonas maltophilia R551-3.</title>
        <authorList>
            <consortium name="US DOE Joint Genome Institute"/>
            <person name="Lucas S."/>
            <person name="Copeland A."/>
            <person name="Lapidus A."/>
            <person name="Glavina del Rio T."/>
            <person name="Dalin E."/>
            <person name="Tice H."/>
            <person name="Pitluck S."/>
            <person name="Chain P."/>
            <person name="Malfatti S."/>
            <person name="Shin M."/>
            <person name="Vergez L."/>
            <person name="Lang D."/>
            <person name="Schmutz J."/>
            <person name="Larimer F."/>
            <person name="Land M."/>
            <person name="Hauser L."/>
            <person name="Kyrpides N."/>
            <person name="Mikhailova N."/>
            <person name="Taghavi S."/>
            <person name="Monchy S."/>
            <person name="Newman L."/>
            <person name="Vangronsveld J."/>
            <person name="van der Lelie D."/>
            <person name="Richardson P."/>
        </authorList>
    </citation>
    <scope>NUCLEOTIDE SEQUENCE [LARGE SCALE GENOMIC DNA]</scope>
    <source>
        <strain>R551-3</strain>
    </source>
</reference>
<protein>
    <recommendedName>
        <fullName evidence="1">D-aminoacyl-tRNA deacylase</fullName>
        <shortName evidence="1">DTD</shortName>
        <ecNumber evidence="1">3.1.1.96</ecNumber>
    </recommendedName>
    <alternativeName>
        <fullName evidence="1">Gly-tRNA(Ala) deacylase</fullName>
    </alternativeName>
</protein>
<comment type="function">
    <text evidence="1">An aminoacyl-tRNA editing enzyme that deacylates mischarged D-aminoacyl-tRNAs. Also deacylates mischarged glycyl-tRNA(Ala), protecting cells against glycine mischarging by AlaRS. Acts via tRNA-based rather than protein-based catalysis; rejects L-amino acids rather than detecting D-amino acids in the active site. By recycling D-aminoacyl-tRNA to D-amino acids and free tRNA molecules, this enzyme counteracts the toxicity associated with the formation of D-aminoacyl-tRNA entities in vivo and helps enforce protein L-homochirality.</text>
</comment>
<comment type="catalytic activity">
    <reaction evidence="1">
        <text>glycyl-tRNA(Ala) + H2O = tRNA(Ala) + glycine + H(+)</text>
        <dbReference type="Rhea" id="RHEA:53744"/>
        <dbReference type="Rhea" id="RHEA-COMP:9657"/>
        <dbReference type="Rhea" id="RHEA-COMP:13640"/>
        <dbReference type="ChEBI" id="CHEBI:15377"/>
        <dbReference type="ChEBI" id="CHEBI:15378"/>
        <dbReference type="ChEBI" id="CHEBI:57305"/>
        <dbReference type="ChEBI" id="CHEBI:78442"/>
        <dbReference type="ChEBI" id="CHEBI:78522"/>
        <dbReference type="EC" id="3.1.1.96"/>
    </reaction>
</comment>
<comment type="catalytic activity">
    <reaction evidence="1">
        <text>a D-aminoacyl-tRNA + H2O = a tRNA + a D-alpha-amino acid + H(+)</text>
        <dbReference type="Rhea" id="RHEA:13953"/>
        <dbReference type="Rhea" id="RHEA-COMP:10123"/>
        <dbReference type="Rhea" id="RHEA-COMP:10124"/>
        <dbReference type="ChEBI" id="CHEBI:15377"/>
        <dbReference type="ChEBI" id="CHEBI:15378"/>
        <dbReference type="ChEBI" id="CHEBI:59871"/>
        <dbReference type="ChEBI" id="CHEBI:78442"/>
        <dbReference type="ChEBI" id="CHEBI:79333"/>
        <dbReference type="EC" id="3.1.1.96"/>
    </reaction>
</comment>
<comment type="subunit">
    <text evidence="1">Homodimer.</text>
</comment>
<comment type="subcellular location">
    <subcellularLocation>
        <location evidence="1">Cytoplasm</location>
    </subcellularLocation>
</comment>
<comment type="domain">
    <text evidence="1">A Gly-cisPro motif from one monomer fits into the active site of the other monomer to allow specific chiral rejection of L-amino acids.</text>
</comment>
<comment type="similarity">
    <text evidence="1">Belongs to the DTD family.</text>
</comment>
<keyword id="KW-0963">Cytoplasm</keyword>
<keyword id="KW-0378">Hydrolase</keyword>
<keyword id="KW-0694">RNA-binding</keyword>
<keyword id="KW-0820">tRNA-binding</keyword>
<gene>
    <name evidence="1" type="primary">dtd</name>
    <name type="ordered locus">Smal_3573</name>
</gene>